<keyword id="KW-0067">ATP-binding</keyword>
<keyword id="KW-0436">Ligase</keyword>
<keyword id="KW-0547">Nucleotide-binding</keyword>
<keyword id="KW-0648">Protein biosynthesis</keyword>
<keyword id="KW-1185">Reference proteome</keyword>
<gene>
    <name evidence="1" type="primary">gatC</name>
    <name type="ordered locus">RC1_1517</name>
</gene>
<protein>
    <recommendedName>
        <fullName evidence="1">Aspartyl/glutamyl-tRNA(Asn/Gln) amidotransferase subunit C</fullName>
        <shortName evidence="1">Asp/Glu-ADT subunit C</shortName>
        <ecNumber evidence="1">6.3.5.-</ecNumber>
    </recommendedName>
</protein>
<name>GATC_RHOCS</name>
<proteinExistence type="inferred from homology"/>
<accession>B6IN24</accession>
<sequence>MSLDKATVAKIAHLARIRVPEEEQEHLAQELNGILGWVEQLGEVDTDGVQPITSNVAQTLRRRQDVVTDGGYPEKVVANAPEGAEHFFAVPKVVE</sequence>
<comment type="function">
    <text evidence="1">Allows the formation of correctly charged Asn-tRNA(Asn) or Gln-tRNA(Gln) through the transamidation of misacylated Asp-tRNA(Asn) or Glu-tRNA(Gln) in organisms which lack either or both of asparaginyl-tRNA or glutaminyl-tRNA synthetases. The reaction takes place in the presence of glutamine and ATP through an activated phospho-Asp-tRNA(Asn) or phospho-Glu-tRNA(Gln).</text>
</comment>
<comment type="catalytic activity">
    <reaction evidence="1">
        <text>L-glutamyl-tRNA(Gln) + L-glutamine + ATP + H2O = L-glutaminyl-tRNA(Gln) + L-glutamate + ADP + phosphate + H(+)</text>
        <dbReference type="Rhea" id="RHEA:17521"/>
        <dbReference type="Rhea" id="RHEA-COMP:9681"/>
        <dbReference type="Rhea" id="RHEA-COMP:9684"/>
        <dbReference type="ChEBI" id="CHEBI:15377"/>
        <dbReference type="ChEBI" id="CHEBI:15378"/>
        <dbReference type="ChEBI" id="CHEBI:29985"/>
        <dbReference type="ChEBI" id="CHEBI:30616"/>
        <dbReference type="ChEBI" id="CHEBI:43474"/>
        <dbReference type="ChEBI" id="CHEBI:58359"/>
        <dbReference type="ChEBI" id="CHEBI:78520"/>
        <dbReference type="ChEBI" id="CHEBI:78521"/>
        <dbReference type="ChEBI" id="CHEBI:456216"/>
    </reaction>
</comment>
<comment type="catalytic activity">
    <reaction evidence="1">
        <text>L-aspartyl-tRNA(Asn) + L-glutamine + ATP + H2O = L-asparaginyl-tRNA(Asn) + L-glutamate + ADP + phosphate + 2 H(+)</text>
        <dbReference type="Rhea" id="RHEA:14513"/>
        <dbReference type="Rhea" id="RHEA-COMP:9674"/>
        <dbReference type="Rhea" id="RHEA-COMP:9677"/>
        <dbReference type="ChEBI" id="CHEBI:15377"/>
        <dbReference type="ChEBI" id="CHEBI:15378"/>
        <dbReference type="ChEBI" id="CHEBI:29985"/>
        <dbReference type="ChEBI" id="CHEBI:30616"/>
        <dbReference type="ChEBI" id="CHEBI:43474"/>
        <dbReference type="ChEBI" id="CHEBI:58359"/>
        <dbReference type="ChEBI" id="CHEBI:78515"/>
        <dbReference type="ChEBI" id="CHEBI:78516"/>
        <dbReference type="ChEBI" id="CHEBI:456216"/>
    </reaction>
</comment>
<comment type="subunit">
    <text evidence="1">Heterotrimer of A, B and C subunits.</text>
</comment>
<comment type="similarity">
    <text evidence="1">Belongs to the GatC family.</text>
</comment>
<feature type="chain" id="PRO_1000095312" description="Aspartyl/glutamyl-tRNA(Asn/Gln) amidotransferase subunit C">
    <location>
        <begin position="1"/>
        <end position="95"/>
    </location>
</feature>
<organism>
    <name type="scientific">Rhodospirillum centenum (strain ATCC 51521 / SW)</name>
    <dbReference type="NCBI Taxonomy" id="414684"/>
    <lineage>
        <taxon>Bacteria</taxon>
        <taxon>Pseudomonadati</taxon>
        <taxon>Pseudomonadota</taxon>
        <taxon>Alphaproteobacteria</taxon>
        <taxon>Rhodospirillales</taxon>
        <taxon>Rhodospirillaceae</taxon>
        <taxon>Rhodospirillum</taxon>
    </lineage>
</organism>
<evidence type="ECO:0000255" key="1">
    <source>
        <dbReference type="HAMAP-Rule" id="MF_00122"/>
    </source>
</evidence>
<dbReference type="EC" id="6.3.5.-" evidence="1"/>
<dbReference type="EMBL" id="CP000613">
    <property type="protein sequence ID" value="ACI98921.1"/>
    <property type="molecule type" value="Genomic_DNA"/>
</dbReference>
<dbReference type="RefSeq" id="WP_012566707.1">
    <property type="nucleotide sequence ID" value="NC_011420.2"/>
</dbReference>
<dbReference type="SMR" id="B6IN24"/>
<dbReference type="STRING" id="414684.RC1_1517"/>
<dbReference type="KEGG" id="rce:RC1_1517"/>
<dbReference type="eggNOG" id="COG0721">
    <property type="taxonomic scope" value="Bacteria"/>
</dbReference>
<dbReference type="HOGENOM" id="CLU_105899_2_0_5"/>
<dbReference type="OrthoDB" id="9794326at2"/>
<dbReference type="Proteomes" id="UP000001591">
    <property type="component" value="Chromosome"/>
</dbReference>
<dbReference type="GO" id="GO:0050566">
    <property type="term" value="F:asparaginyl-tRNA synthase (glutamine-hydrolyzing) activity"/>
    <property type="evidence" value="ECO:0007669"/>
    <property type="project" value="RHEA"/>
</dbReference>
<dbReference type="GO" id="GO:0005524">
    <property type="term" value="F:ATP binding"/>
    <property type="evidence" value="ECO:0007669"/>
    <property type="project" value="UniProtKB-KW"/>
</dbReference>
<dbReference type="GO" id="GO:0050567">
    <property type="term" value="F:glutaminyl-tRNA synthase (glutamine-hydrolyzing) activity"/>
    <property type="evidence" value="ECO:0007669"/>
    <property type="project" value="UniProtKB-UniRule"/>
</dbReference>
<dbReference type="GO" id="GO:0070681">
    <property type="term" value="P:glutaminyl-tRNAGln biosynthesis via transamidation"/>
    <property type="evidence" value="ECO:0007669"/>
    <property type="project" value="TreeGrafter"/>
</dbReference>
<dbReference type="GO" id="GO:0006450">
    <property type="term" value="P:regulation of translational fidelity"/>
    <property type="evidence" value="ECO:0007669"/>
    <property type="project" value="InterPro"/>
</dbReference>
<dbReference type="GO" id="GO:0006412">
    <property type="term" value="P:translation"/>
    <property type="evidence" value="ECO:0007669"/>
    <property type="project" value="UniProtKB-UniRule"/>
</dbReference>
<dbReference type="Gene3D" id="1.10.20.60">
    <property type="entry name" value="Glu-tRNAGln amidotransferase C subunit, N-terminal domain"/>
    <property type="match status" value="1"/>
</dbReference>
<dbReference type="HAMAP" id="MF_00122">
    <property type="entry name" value="GatC"/>
    <property type="match status" value="1"/>
</dbReference>
<dbReference type="InterPro" id="IPR036113">
    <property type="entry name" value="Asp/Glu-ADT_sf_sub_c"/>
</dbReference>
<dbReference type="InterPro" id="IPR003837">
    <property type="entry name" value="GatC"/>
</dbReference>
<dbReference type="NCBIfam" id="TIGR00135">
    <property type="entry name" value="gatC"/>
    <property type="match status" value="1"/>
</dbReference>
<dbReference type="PANTHER" id="PTHR15004">
    <property type="entry name" value="GLUTAMYL-TRNA(GLN) AMIDOTRANSFERASE SUBUNIT C, MITOCHONDRIAL"/>
    <property type="match status" value="1"/>
</dbReference>
<dbReference type="PANTHER" id="PTHR15004:SF0">
    <property type="entry name" value="GLUTAMYL-TRNA(GLN) AMIDOTRANSFERASE SUBUNIT C, MITOCHONDRIAL"/>
    <property type="match status" value="1"/>
</dbReference>
<dbReference type="Pfam" id="PF02686">
    <property type="entry name" value="GatC"/>
    <property type="match status" value="1"/>
</dbReference>
<dbReference type="SUPFAM" id="SSF141000">
    <property type="entry name" value="Glu-tRNAGln amidotransferase C subunit"/>
    <property type="match status" value="1"/>
</dbReference>
<reference key="1">
    <citation type="submission" date="2007-03" db="EMBL/GenBank/DDBJ databases">
        <title>Genome sequence of Rhodospirillum centenum.</title>
        <authorList>
            <person name="Touchman J.W."/>
            <person name="Bauer C."/>
            <person name="Blankenship R.E."/>
        </authorList>
    </citation>
    <scope>NUCLEOTIDE SEQUENCE [LARGE SCALE GENOMIC DNA]</scope>
    <source>
        <strain>ATCC 51521 / SW</strain>
    </source>
</reference>